<gene>
    <name evidence="1" type="primary">menG</name>
    <name type="ordered locus">lp_3431</name>
</gene>
<reference key="1">
    <citation type="journal article" date="2003" name="Proc. Natl. Acad. Sci. U.S.A.">
        <title>Complete genome sequence of Lactobacillus plantarum WCFS1.</title>
        <authorList>
            <person name="Kleerebezem M."/>
            <person name="Boekhorst J."/>
            <person name="van Kranenburg R."/>
            <person name="Molenaar D."/>
            <person name="Kuipers O.P."/>
            <person name="Leer R."/>
            <person name="Tarchini R."/>
            <person name="Peters S.A."/>
            <person name="Sandbrink H.M."/>
            <person name="Fiers M.W.E.J."/>
            <person name="Stiekema W."/>
            <person name="Klein Lankhorst R.M."/>
            <person name="Bron P.A."/>
            <person name="Hoffer S.M."/>
            <person name="Nierop Groot M.N."/>
            <person name="Kerkhoven R."/>
            <person name="De Vries M."/>
            <person name="Ursing B."/>
            <person name="De Vos W.M."/>
            <person name="Siezen R.J."/>
        </authorList>
    </citation>
    <scope>NUCLEOTIDE SEQUENCE [LARGE SCALE GENOMIC DNA]</scope>
    <source>
        <strain>ATCC BAA-793 / NCIMB 8826 / WCFS1</strain>
    </source>
</reference>
<reference key="2">
    <citation type="journal article" date="2012" name="J. Bacteriol.">
        <title>Complete resequencing and reannotation of the Lactobacillus plantarum WCFS1 genome.</title>
        <authorList>
            <person name="Siezen R.J."/>
            <person name="Francke C."/>
            <person name="Renckens B."/>
            <person name="Boekhorst J."/>
            <person name="Wels M."/>
            <person name="Kleerebezem M."/>
            <person name="van Hijum S.A."/>
        </authorList>
    </citation>
    <scope>NUCLEOTIDE SEQUENCE [LARGE SCALE GENOMIC DNA]</scope>
    <scope>GENOME REANNOTATION</scope>
    <source>
        <strain>ATCC BAA-793 / NCIMB 8826 / WCFS1</strain>
    </source>
</reference>
<organism>
    <name type="scientific">Lactiplantibacillus plantarum (strain ATCC BAA-793 / NCIMB 8826 / WCFS1)</name>
    <name type="common">Lactobacillus plantarum</name>
    <dbReference type="NCBI Taxonomy" id="220668"/>
    <lineage>
        <taxon>Bacteria</taxon>
        <taxon>Bacillati</taxon>
        <taxon>Bacillota</taxon>
        <taxon>Bacilli</taxon>
        <taxon>Lactobacillales</taxon>
        <taxon>Lactobacillaceae</taxon>
        <taxon>Lactiplantibacillus</taxon>
    </lineage>
</organism>
<feature type="chain" id="PRO_0000193285" description="Demethylmenaquinone methyltransferase">
    <location>
        <begin position="1"/>
        <end position="237"/>
    </location>
</feature>
<feature type="binding site" evidence="1">
    <location>
        <position position="58"/>
    </location>
    <ligand>
        <name>S-adenosyl-L-methionine</name>
        <dbReference type="ChEBI" id="CHEBI:59789"/>
    </ligand>
</feature>
<feature type="binding site" evidence="1">
    <location>
        <position position="79"/>
    </location>
    <ligand>
        <name>S-adenosyl-L-methionine</name>
        <dbReference type="ChEBI" id="CHEBI:59789"/>
    </ligand>
</feature>
<feature type="binding site" evidence="1">
    <location>
        <begin position="107"/>
        <end position="108"/>
    </location>
    <ligand>
        <name>S-adenosyl-L-methionine</name>
        <dbReference type="ChEBI" id="CHEBI:59789"/>
    </ligand>
</feature>
<keyword id="KW-0474">Menaquinone biosynthesis</keyword>
<keyword id="KW-0489">Methyltransferase</keyword>
<keyword id="KW-1185">Reference proteome</keyword>
<keyword id="KW-0949">S-adenosyl-L-methionine</keyword>
<keyword id="KW-0808">Transferase</keyword>
<comment type="function">
    <text evidence="1">Methyltransferase required for the conversion of demethylmenaquinol (DMKH2) to menaquinol (MKH2).</text>
</comment>
<comment type="catalytic activity">
    <reaction evidence="1">
        <text>a 2-demethylmenaquinol + S-adenosyl-L-methionine = a menaquinol + S-adenosyl-L-homocysteine + H(+)</text>
        <dbReference type="Rhea" id="RHEA:42640"/>
        <dbReference type="Rhea" id="RHEA-COMP:9539"/>
        <dbReference type="Rhea" id="RHEA-COMP:9563"/>
        <dbReference type="ChEBI" id="CHEBI:15378"/>
        <dbReference type="ChEBI" id="CHEBI:18151"/>
        <dbReference type="ChEBI" id="CHEBI:55437"/>
        <dbReference type="ChEBI" id="CHEBI:57856"/>
        <dbReference type="ChEBI" id="CHEBI:59789"/>
        <dbReference type="EC" id="2.1.1.163"/>
    </reaction>
</comment>
<comment type="pathway">
    <text evidence="1">Quinol/quinone metabolism; menaquinone biosynthesis; menaquinol from 1,4-dihydroxy-2-naphthoate: step 2/2.</text>
</comment>
<comment type="similarity">
    <text evidence="1">Belongs to the class I-like SAM-binding methyltransferase superfamily. MenG/UbiE family.</text>
</comment>
<protein>
    <recommendedName>
        <fullName evidence="1">Demethylmenaquinone methyltransferase</fullName>
        <ecNumber evidence="1">2.1.1.163</ecNumber>
    </recommendedName>
</protein>
<name>MENG_LACPL</name>
<evidence type="ECO:0000255" key="1">
    <source>
        <dbReference type="HAMAP-Rule" id="MF_01813"/>
    </source>
</evidence>
<accession>Q88SI6</accession>
<accession>F9UUA9</accession>
<dbReference type="EC" id="2.1.1.163" evidence="1"/>
<dbReference type="EMBL" id="AL935263">
    <property type="protein sequence ID" value="CCC80411.1"/>
    <property type="molecule type" value="Genomic_DNA"/>
</dbReference>
<dbReference type="RefSeq" id="WP_011102162.1">
    <property type="nucleotide sequence ID" value="NC_004567.2"/>
</dbReference>
<dbReference type="RefSeq" id="YP_004890925.1">
    <property type="nucleotide sequence ID" value="NC_004567.2"/>
</dbReference>
<dbReference type="SMR" id="Q88SI6"/>
<dbReference type="STRING" id="220668.lp_3431"/>
<dbReference type="EnsemblBacteria" id="CCC80411">
    <property type="protein sequence ID" value="CCC80411"/>
    <property type="gene ID" value="lp_3431"/>
</dbReference>
<dbReference type="KEGG" id="lpl:lp_3431"/>
<dbReference type="PATRIC" id="fig|220668.9.peg.2859"/>
<dbReference type="eggNOG" id="COG2226">
    <property type="taxonomic scope" value="Bacteria"/>
</dbReference>
<dbReference type="HOGENOM" id="CLU_037990_0_0_9"/>
<dbReference type="OrthoDB" id="9808140at2"/>
<dbReference type="PhylomeDB" id="Q88SI6"/>
<dbReference type="UniPathway" id="UPA00079">
    <property type="reaction ID" value="UER00169"/>
</dbReference>
<dbReference type="Proteomes" id="UP000000432">
    <property type="component" value="Chromosome"/>
</dbReference>
<dbReference type="GO" id="GO:0043770">
    <property type="term" value="F:demethylmenaquinone methyltransferase activity"/>
    <property type="evidence" value="ECO:0007669"/>
    <property type="project" value="UniProtKB-UniRule"/>
</dbReference>
<dbReference type="GO" id="GO:0009234">
    <property type="term" value="P:menaquinone biosynthetic process"/>
    <property type="evidence" value="ECO:0007669"/>
    <property type="project" value="UniProtKB-UniRule"/>
</dbReference>
<dbReference type="GO" id="GO:0032259">
    <property type="term" value="P:methylation"/>
    <property type="evidence" value="ECO:0007669"/>
    <property type="project" value="UniProtKB-KW"/>
</dbReference>
<dbReference type="CDD" id="cd02440">
    <property type="entry name" value="AdoMet_MTases"/>
    <property type="match status" value="1"/>
</dbReference>
<dbReference type="FunFam" id="3.40.50.150:FF:000086">
    <property type="entry name" value="Demethylmenaquinone methyltransferase"/>
    <property type="match status" value="1"/>
</dbReference>
<dbReference type="Gene3D" id="3.40.50.150">
    <property type="entry name" value="Vaccinia Virus protein VP39"/>
    <property type="match status" value="1"/>
</dbReference>
<dbReference type="HAMAP" id="MF_01813">
    <property type="entry name" value="MenG_UbiE_methyltr"/>
    <property type="match status" value="1"/>
</dbReference>
<dbReference type="InterPro" id="IPR029063">
    <property type="entry name" value="SAM-dependent_MTases_sf"/>
</dbReference>
<dbReference type="InterPro" id="IPR004033">
    <property type="entry name" value="UbiE/COQ5_MeTrFase"/>
</dbReference>
<dbReference type="InterPro" id="IPR023576">
    <property type="entry name" value="UbiE/COQ5_MeTrFase_CS"/>
</dbReference>
<dbReference type="NCBIfam" id="TIGR01934">
    <property type="entry name" value="MenG_MenH_UbiE"/>
    <property type="match status" value="1"/>
</dbReference>
<dbReference type="NCBIfam" id="NF001243">
    <property type="entry name" value="PRK00216.1-4"/>
    <property type="match status" value="1"/>
</dbReference>
<dbReference type="NCBIfam" id="NF001244">
    <property type="entry name" value="PRK00216.1-5"/>
    <property type="match status" value="1"/>
</dbReference>
<dbReference type="PANTHER" id="PTHR43591:SF24">
    <property type="entry name" value="2-METHOXY-6-POLYPRENYL-1,4-BENZOQUINOL METHYLASE, MITOCHONDRIAL"/>
    <property type="match status" value="1"/>
</dbReference>
<dbReference type="PANTHER" id="PTHR43591">
    <property type="entry name" value="METHYLTRANSFERASE"/>
    <property type="match status" value="1"/>
</dbReference>
<dbReference type="Pfam" id="PF01209">
    <property type="entry name" value="Ubie_methyltran"/>
    <property type="match status" value="1"/>
</dbReference>
<dbReference type="SUPFAM" id="SSF53335">
    <property type="entry name" value="S-adenosyl-L-methionine-dependent methyltransferases"/>
    <property type="match status" value="1"/>
</dbReference>
<dbReference type="PROSITE" id="PS51608">
    <property type="entry name" value="SAM_MT_UBIE"/>
    <property type="match status" value="1"/>
</dbReference>
<dbReference type="PROSITE" id="PS01183">
    <property type="entry name" value="UBIE_1"/>
    <property type="match status" value="1"/>
</dbReference>
<dbReference type="PROSITE" id="PS01184">
    <property type="entry name" value="UBIE_2"/>
    <property type="match status" value="1"/>
</dbReference>
<sequence length="237" mass="27150">MANRYLHNVQGLFDTIAPNYDRMNNIISLGTHRHWRKQTMAQIHLASNAHVLDLCCGTGDWTIALAKELQAPGEVIGLDFSAPMLKLAQQKVTQQQVADRVWLRRGNAMHLPFKDNTFDLVTIGFGLRNLPDKAQALTEIYRVLKPGARLVCLETSQPDQPLIKPVWQWYFTKVVPLFGRLFAHQYQEYSYLQETTRHFASYQQLATMFQQAGFQNVHFQRFNFGAAAAHFGTKEAK</sequence>
<proteinExistence type="inferred from homology"/>